<dbReference type="EC" id="2.4.99.17" evidence="1"/>
<dbReference type="EMBL" id="CP000946">
    <property type="protein sequence ID" value="ACA78850.1"/>
    <property type="molecule type" value="Genomic_DNA"/>
</dbReference>
<dbReference type="RefSeq" id="WP_001266480.1">
    <property type="nucleotide sequence ID" value="NZ_MTFT01000010.1"/>
</dbReference>
<dbReference type="SMR" id="B1J044"/>
<dbReference type="KEGG" id="ecl:EcolC_3228"/>
<dbReference type="HOGENOM" id="CLU_039110_1_0_6"/>
<dbReference type="UniPathway" id="UPA00392"/>
<dbReference type="GO" id="GO:0005737">
    <property type="term" value="C:cytoplasm"/>
    <property type="evidence" value="ECO:0007669"/>
    <property type="project" value="UniProtKB-SubCell"/>
</dbReference>
<dbReference type="GO" id="GO:0051075">
    <property type="term" value="F:S-adenosylmethionine:tRNA ribosyltransferase-isomerase activity"/>
    <property type="evidence" value="ECO:0007669"/>
    <property type="project" value="UniProtKB-EC"/>
</dbReference>
<dbReference type="GO" id="GO:0008616">
    <property type="term" value="P:queuosine biosynthetic process"/>
    <property type="evidence" value="ECO:0007669"/>
    <property type="project" value="UniProtKB-UniRule"/>
</dbReference>
<dbReference type="GO" id="GO:0002099">
    <property type="term" value="P:tRNA wobble guanine modification"/>
    <property type="evidence" value="ECO:0007669"/>
    <property type="project" value="TreeGrafter"/>
</dbReference>
<dbReference type="FunFam" id="2.40.10.240:FF:000001">
    <property type="entry name" value="S-adenosylmethionine:tRNA ribosyltransferase-isomerase"/>
    <property type="match status" value="1"/>
</dbReference>
<dbReference type="FunFam" id="3.40.1780.10:FF:000001">
    <property type="entry name" value="S-adenosylmethionine:tRNA ribosyltransferase-isomerase"/>
    <property type="match status" value="1"/>
</dbReference>
<dbReference type="Gene3D" id="2.40.10.240">
    <property type="entry name" value="QueA-like"/>
    <property type="match status" value="1"/>
</dbReference>
<dbReference type="Gene3D" id="3.40.1780.10">
    <property type="entry name" value="QueA-like"/>
    <property type="match status" value="1"/>
</dbReference>
<dbReference type="HAMAP" id="MF_00113">
    <property type="entry name" value="QueA"/>
    <property type="match status" value="1"/>
</dbReference>
<dbReference type="InterPro" id="IPR003699">
    <property type="entry name" value="QueA"/>
</dbReference>
<dbReference type="InterPro" id="IPR042118">
    <property type="entry name" value="QueA_dom1"/>
</dbReference>
<dbReference type="InterPro" id="IPR042119">
    <property type="entry name" value="QueA_dom2"/>
</dbReference>
<dbReference type="InterPro" id="IPR036100">
    <property type="entry name" value="QueA_sf"/>
</dbReference>
<dbReference type="NCBIfam" id="NF001140">
    <property type="entry name" value="PRK00147.1"/>
    <property type="match status" value="1"/>
</dbReference>
<dbReference type="NCBIfam" id="TIGR00113">
    <property type="entry name" value="queA"/>
    <property type="match status" value="1"/>
</dbReference>
<dbReference type="PANTHER" id="PTHR30307">
    <property type="entry name" value="S-ADENOSYLMETHIONINE:TRNA RIBOSYLTRANSFERASE-ISOMERASE"/>
    <property type="match status" value="1"/>
</dbReference>
<dbReference type="PANTHER" id="PTHR30307:SF0">
    <property type="entry name" value="S-ADENOSYLMETHIONINE:TRNA RIBOSYLTRANSFERASE-ISOMERASE"/>
    <property type="match status" value="1"/>
</dbReference>
<dbReference type="Pfam" id="PF02547">
    <property type="entry name" value="Queuosine_synth"/>
    <property type="match status" value="1"/>
</dbReference>
<dbReference type="SUPFAM" id="SSF111337">
    <property type="entry name" value="QueA-like"/>
    <property type="match status" value="1"/>
</dbReference>
<evidence type="ECO:0000255" key="1">
    <source>
        <dbReference type="HAMAP-Rule" id="MF_00113"/>
    </source>
</evidence>
<sequence>MRVTDFSFELPESLIAHYPMPERSSCRLLLLDGPTGALTHGTFTDLLDKLNPGDLLVFNNTRVIPARLFGRKASGGKIEVLVERMLDDKRILAHIRASKAPKPGAELLLGDDESINATMTARHGALFEVEFNDERSVLDILNSIGHMPLPPYIDRPDEDADRELYQTVYSEKPGAVAAPTAGLHFDEPLLEKLRAKGVEMAFVTLHVGAGTFQPVRVDTIEDHIMHSEYAEVPQDVVDAVLAAKARGNRVIAVGTTSVRSLESAAQAAKNDLIEPFFDDTQIFIYPGFQYKVVDALVTNFHLPESTLIMLVSAFAGYQHTMNAYKAAVEEKYRFFSYGDAMFITYNPQAINERVGE</sequence>
<reference key="1">
    <citation type="submission" date="2008-02" db="EMBL/GenBank/DDBJ databases">
        <title>Complete sequence of Escherichia coli C str. ATCC 8739.</title>
        <authorList>
            <person name="Copeland A."/>
            <person name="Lucas S."/>
            <person name="Lapidus A."/>
            <person name="Glavina del Rio T."/>
            <person name="Dalin E."/>
            <person name="Tice H."/>
            <person name="Bruce D."/>
            <person name="Goodwin L."/>
            <person name="Pitluck S."/>
            <person name="Kiss H."/>
            <person name="Brettin T."/>
            <person name="Detter J.C."/>
            <person name="Han C."/>
            <person name="Kuske C.R."/>
            <person name="Schmutz J."/>
            <person name="Larimer F."/>
            <person name="Land M."/>
            <person name="Hauser L."/>
            <person name="Kyrpides N."/>
            <person name="Mikhailova N."/>
            <person name="Ingram L."/>
            <person name="Richardson P."/>
        </authorList>
    </citation>
    <scope>NUCLEOTIDE SEQUENCE [LARGE SCALE GENOMIC DNA]</scope>
    <source>
        <strain>ATCC 8739 / DSM 1576 / NBRC 3972 / NCIMB 8545 / WDCM 00012 / Crooks</strain>
    </source>
</reference>
<feature type="chain" id="PRO_1000076003" description="S-adenosylmethionine:tRNA ribosyltransferase-isomerase">
    <location>
        <begin position="1"/>
        <end position="356"/>
    </location>
</feature>
<protein>
    <recommendedName>
        <fullName evidence="1">S-adenosylmethionine:tRNA ribosyltransferase-isomerase</fullName>
        <ecNumber evidence="1">2.4.99.17</ecNumber>
    </recommendedName>
    <alternativeName>
        <fullName evidence="1">Queuosine biosynthesis protein QueA</fullName>
    </alternativeName>
</protein>
<organism>
    <name type="scientific">Escherichia coli (strain ATCC 8739 / DSM 1576 / NBRC 3972 / NCIMB 8545 / WDCM 00012 / Crooks)</name>
    <dbReference type="NCBI Taxonomy" id="481805"/>
    <lineage>
        <taxon>Bacteria</taxon>
        <taxon>Pseudomonadati</taxon>
        <taxon>Pseudomonadota</taxon>
        <taxon>Gammaproteobacteria</taxon>
        <taxon>Enterobacterales</taxon>
        <taxon>Enterobacteriaceae</taxon>
        <taxon>Escherichia</taxon>
    </lineage>
</organism>
<name>QUEA_ECOLC</name>
<gene>
    <name evidence="1" type="primary">queA</name>
    <name type="ordered locus">EcolC_3228</name>
</gene>
<accession>B1J044</accession>
<comment type="function">
    <text evidence="1">Transfers and isomerizes the ribose moiety from AdoMet to the 7-aminomethyl group of 7-deazaguanine (preQ1-tRNA) to give epoxyqueuosine (oQ-tRNA).</text>
</comment>
<comment type="catalytic activity">
    <reaction evidence="1">
        <text>7-aminomethyl-7-carbaguanosine(34) in tRNA + S-adenosyl-L-methionine = epoxyqueuosine(34) in tRNA + adenine + L-methionine + 2 H(+)</text>
        <dbReference type="Rhea" id="RHEA:32155"/>
        <dbReference type="Rhea" id="RHEA-COMP:10342"/>
        <dbReference type="Rhea" id="RHEA-COMP:18582"/>
        <dbReference type="ChEBI" id="CHEBI:15378"/>
        <dbReference type="ChEBI" id="CHEBI:16708"/>
        <dbReference type="ChEBI" id="CHEBI:57844"/>
        <dbReference type="ChEBI" id="CHEBI:59789"/>
        <dbReference type="ChEBI" id="CHEBI:82833"/>
        <dbReference type="ChEBI" id="CHEBI:194443"/>
        <dbReference type="EC" id="2.4.99.17"/>
    </reaction>
</comment>
<comment type="pathway">
    <text evidence="1">tRNA modification; tRNA-queuosine biosynthesis.</text>
</comment>
<comment type="subunit">
    <text evidence="1">Monomer.</text>
</comment>
<comment type="subcellular location">
    <subcellularLocation>
        <location evidence="1">Cytoplasm</location>
    </subcellularLocation>
</comment>
<comment type="similarity">
    <text evidence="1">Belongs to the QueA family.</text>
</comment>
<proteinExistence type="inferred from homology"/>
<keyword id="KW-0963">Cytoplasm</keyword>
<keyword id="KW-0671">Queuosine biosynthesis</keyword>
<keyword id="KW-0949">S-adenosyl-L-methionine</keyword>
<keyword id="KW-0808">Transferase</keyword>